<comment type="subcellular location">
    <subcellularLocation>
        <location evidence="3">Membrane</location>
        <topology evidence="3">Single-pass membrane protein</topology>
    </subcellularLocation>
</comment>
<comment type="similarity">
    <text evidence="3">Belongs to the SMIM8 family.</text>
</comment>
<comment type="sequence caution" evidence="3">
    <conflict type="erroneous gene model prediction">
        <sequence resource="EMBL-CDS" id="CAI11513"/>
    </conflict>
</comment>
<comment type="sequence caution" evidence="3">
    <conflict type="erroneous gene model prediction">
        <sequence resource="EMBL-CDS" id="CAI11889"/>
    </conflict>
</comment>
<accession>Q502E5</accession>
<accession>Q5RHI7</accession>
<accession>Q5SNV3</accession>
<dbReference type="EMBL" id="AL954305">
    <property type="protein sequence ID" value="CAI11513.1"/>
    <property type="status" value="ALT_SEQ"/>
    <property type="molecule type" value="Genomic_DNA"/>
</dbReference>
<dbReference type="EMBL" id="BX511077">
    <property type="protein sequence ID" value="CAI11889.1"/>
    <property type="status" value="ALT_SEQ"/>
    <property type="molecule type" value="Genomic_DNA"/>
</dbReference>
<dbReference type="EMBL" id="BC095732">
    <property type="protein sequence ID" value="AAH95732.1"/>
    <property type="molecule type" value="mRNA"/>
</dbReference>
<dbReference type="EMBL" id="BC115096">
    <property type="protein sequence ID" value="AAI15097.1"/>
    <property type="molecule type" value="mRNA"/>
</dbReference>
<dbReference type="FunCoup" id="Q502E5">
    <property type="interactions" value="794"/>
</dbReference>
<dbReference type="STRING" id="7955.ENSDARP00000095554"/>
<dbReference type="PaxDb" id="7955-ENSDARP00000095554"/>
<dbReference type="AGR" id="ZFIN:ZDB-GENE-050522-423"/>
<dbReference type="ZFIN" id="ZDB-GENE-050522-423">
    <property type="gene designation" value="smim8"/>
</dbReference>
<dbReference type="eggNOG" id="ENOG502S4X3">
    <property type="taxonomic scope" value="Eukaryota"/>
</dbReference>
<dbReference type="InParanoid" id="Q502E5"/>
<dbReference type="OrthoDB" id="1880105at2759"/>
<dbReference type="PhylomeDB" id="Q502E5"/>
<dbReference type="PRO" id="PR:Q502E5"/>
<dbReference type="Proteomes" id="UP000000437">
    <property type="component" value="Unplaced"/>
</dbReference>
<dbReference type="GO" id="GO:0016020">
    <property type="term" value="C:membrane"/>
    <property type="evidence" value="ECO:0007669"/>
    <property type="project" value="UniProtKB-SubCell"/>
</dbReference>
<dbReference type="InterPro" id="IPR026686">
    <property type="entry name" value="UPF0708"/>
</dbReference>
<dbReference type="PANTHER" id="PTHR14274">
    <property type="entry name" value="SMALL INTEGRAL MEMBRANE PROTEIN 8"/>
    <property type="match status" value="1"/>
</dbReference>
<dbReference type="PANTHER" id="PTHR14274:SF1">
    <property type="entry name" value="SMALL INTEGRAL MEMBRANE PROTEIN 8"/>
    <property type="match status" value="1"/>
</dbReference>
<dbReference type="Pfam" id="PF14937">
    <property type="entry name" value="DUF4500"/>
    <property type="match status" value="1"/>
</dbReference>
<evidence type="ECO:0000255" key="1"/>
<evidence type="ECO:0000256" key="2">
    <source>
        <dbReference type="SAM" id="MobiDB-lite"/>
    </source>
</evidence>
<evidence type="ECO:0000305" key="3"/>
<gene>
    <name type="primary">smim8</name>
    <name type="ORF">si:busm1-189a20.6</name>
    <name type="ORF">si:ch211-241J12.5</name>
    <name type="ORF">zgc:112287</name>
</gene>
<keyword id="KW-0472">Membrane</keyword>
<keyword id="KW-1185">Reference proteome</keyword>
<keyword id="KW-0812">Transmembrane</keyword>
<keyword id="KW-1133">Transmembrane helix</keyword>
<feature type="chain" id="PRO_0000360395" description="Small integral membrane protein 8">
    <location>
        <begin position="1"/>
        <end position="104"/>
    </location>
</feature>
<feature type="transmembrane region" description="Helical" evidence="1">
    <location>
        <begin position="55"/>
        <end position="77"/>
    </location>
</feature>
<feature type="region of interest" description="Disordered" evidence="2">
    <location>
        <begin position="1"/>
        <end position="31"/>
    </location>
</feature>
<feature type="compositionally biased region" description="Low complexity" evidence="2">
    <location>
        <begin position="1"/>
        <end position="11"/>
    </location>
</feature>
<feature type="sequence conflict" description="In Ref. 1; CAI11889." evidence="3" ref="1">
    <original>A</original>
    <variation>S</variation>
    <location>
        <position position="13"/>
    </location>
</feature>
<proteinExistence type="inferred from homology"/>
<organism>
    <name type="scientific">Danio rerio</name>
    <name type="common">Zebrafish</name>
    <name type="synonym">Brachydanio rerio</name>
    <dbReference type="NCBI Taxonomy" id="7955"/>
    <lineage>
        <taxon>Eukaryota</taxon>
        <taxon>Metazoa</taxon>
        <taxon>Chordata</taxon>
        <taxon>Craniata</taxon>
        <taxon>Vertebrata</taxon>
        <taxon>Euteleostomi</taxon>
        <taxon>Actinopterygii</taxon>
        <taxon>Neopterygii</taxon>
        <taxon>Teleostei</taxon>
        <taxon>Ostariophysi</taxon>
        <taxon>Cypriniformes</taxon>
        <taxon>Danionidae</taxon>
        <taxon>Danioninae</taxon>
        <taxon>Danio</taxon>
    </lineage>
</organism>
<reference key="1">
    <citation type="journal article" date="2013" name="Nature">
        <title>The zebrafish reference genome sequence and its relationship to the human genome.</title>
        <authorList>
            <person name="Howe K."/>
            <person name="Clark M.D."/>
            <person name="Torroja C.F."/>
            <person name="Torrance J."/>
            <person name="Berthelot C."/>
            <person name="Muffato M."/>
            <person name="Collins J.E."/>
            <person name="Humphray S."/>
            <person name="McLaren K."/>
            <person name="Matthews L."/>
            <person name="McLaren S."/>
            <person name="Sealy I."/>
            <person name="Caccamo M."/>
            <person name="Churcher C."/>
            <person name="Scott C."/>
            <person name="Barrett J.C."/>
            <person name="Koch R."/>
            <person name="Rauch G.J."/>
            <person name="White S."/>
            <person name="Chow W."/>
            <person name="Kilian B."/>
            <person name="Quintais L.T."/>
            <person name="Guerra-Assuncao J.A."/>
            <person name="Zhou Y."/>
            <person name="Gu Y."/>
            <person name="Yen J."/>
            <person name="Vogel J.H."/>
            <person name="Eyre T."/>
            <person name="Redmond S."/>
            <person name="Banerjee R."/>
            <person name="Chi J."/>
            <person name="Fu B."/>
            <person name="Langley E."/>
            <person name="Maguire S.F."/>
            <person name="Laird G.K."/>
            <person name="Lloyd D."/>
            <person name="Kenyon E."/>
            <person name="Donaldson S."/>
            <person name="Sehra H."/>
            <person name="Almeida-King J."/>
            <person name="Loveland J."/>
            <person name="Trevanion S."/>
            <person name="Jones M."/>
            <person name="Quail M."/>
            <person name="Willey D."/>
            <person name="Hunt A."/>
            <person name="Burton J."/>
            <person name="Sims S."/>
            <person name="McLay K."/>
            <person name="Plumb B."/>
            <person name="Davis J."/>
            <person name="Clee C."/>
            <person name="Oliver K."/>
            <person name="Clark R."/>
            <person name="Riddle C."/>
            <person name="Elliot D."/>
            <person name="Threadgold G."/>
            <person name="Harden G."/>
            <person name="Ware D."/>
            <person name="Begum S."/>
            <person name="Mortimore B."/>
            <person name="Kerry G."/>
            <person name="Heath P."/>
            <person name="Phillimore B."/>
            <person name="Tracey A."/>
            <person name="Corby N."/>
            <person name="Dunn M."/>
            <person name="Johnson C."/>
            <person name="Wood J."/>
            <person name="Clark S."/>
            <person name="Pelan S."/>
            <person name="Griffiths G."/>
            <person name="Smith M."/>
            <person name="Glithero R."/>
            <person name="Howden P."/>
            <person name="Barker N."/>
            <person name="Lloyd C."/>
            <person name="Stevens C."/>
            <person name="Harley J."/>
            <person name="Holt K."/>
            <person name="Panagiotidis G."/>
            <person name="Lovell J."/>
            <person name="Beasley H."/>
            <person name="Henderson C."/>
            <person name="Gordon D."/>
            <person name="Auger K."/>
            <person name="Wright D."/>
            <person name="Collins J."/>
            <person name="Raisen C."/>
            <person name="Dyer L."/>
            <person name="Leung K."/>
            <person name="Robertson L."/>
            <person name="Ambridge K."/>
            <person name="Leongamornlert D."/>
            <person name="McGuire S."/>
            <person name="Gilderthorp R."/>
            <person name="Griffiths C."/>
            <person name="Manthravadi D."/>
            <person name="Nichol S."/>
            <person name="Barker G."/>
            <person name="Whitehead S."/>
            <person name="Kay M."/>
            <person name="Brown J."/>
            <person name="Murnane C."/>
            <person name="Gray E."/>
            <person name="Humphries M."/>
            <person name="Sycamore N."/>
            <person name="Barker D."/>
            <person name="Saunders D."/>
            <person name="Wallis J."/>
            <person name="Babbage A."/>
            <person name="Hammond S."/>
            <person name="Mashreghi-Mohammadi M."/>
            <person name="Barr L."/>
            <person name="Martin S."/>
            <person name="Wray P."/>
            <person name="Ellington A."/>
            <person name="Matthews N."/>
            <person name="Ellwood M."/>
            <person name="Woodmansey R."/>
            <person name="Clark G."/>
            <person name="Cooper J."/>
            <person name="Tromans A."/>
            <person name="Grafham D."/>
            <person name="Skuce C."/>
            <person name="Pandian R."/>
            <person name="Andrews R."/>
            <person name="Harrison E."/>
            <person name="Kimberley A."/>
            <person name="Garnett J."/>
            <person name="Fosker N."/>
            <person name="Hall R."/>
            <person name="Garner P."/>
            <person name="Kelly D."/>
            <person name="Bird C."/>
            <person name="Palmer S."/>
            <person name="Gehring I."/>
            <person name="Berger A."/>
            <person name="Dooley C.M."/>
            <person name="Ersan-Urun Z."/>
            <person name="Eser C."/>
            <person name="Geiger H."/>
            <person name="Geisler M."/>
            <person name="Karotki L."/>
            <person name="Kirn A."/>
            <person name="Konantz J."/>
            <person name="Konantz M."/>
            <person name="Oberlander M."/>
            <person name="Rudolph-Geiger S."/>
            <person name="Teucke M."/>
            <person name="Lanz C."/>
            <person name="Raddatz G."/>
            <person name="Osoegawa K."/>
            <person name="Zhu B."/>
            <person name="Rapp A."/>
            <person name="Widaa S."/>
            <person name="Langford C."/>
            <person name="Yang F."/>
            <person name="Schuster S.C."/>
            <person name="Carter N.P."/>
            <person name="Harrow J."/>
            <person name="Ning Z."/>
            <person name="Herrero J."/>
            <person name="Searle S.M."/>
            <person name="Enright A."/>
            <person name="Geisler R."/>
            <person name="Plasterk R.H."/>
            <person name="Lee C."/>
            <person name="Westerfield M."/>
            <person name="de Jong P.J."/>
            <person name="Zon L.I."/>
            <person name="Postlethwait J.H."/>
            <person name="Nusslein-Volhard C."/>
            <person name="Hubbard T.J."/>
            <person name="Roest Crollius H."/>
            <person name="Rogers J."/>
            <person name="Stemple D.L."/>
        </authorList>
    </citation>
    <scope>NUCLEOTIDE SEQUENCE [LARGE SCALE GENOMIC DNA]</scope>
    <source>
        <strain>Tuebingen</strain>
    </source>
</reference>
<reference key="2">
    <citation type="submission" date="2006-04" db="EMBL/GenBank/DDBJ databases">
        <authorList>
            <consortium name="NIH - Zebrafish Gene Collection (ZGC) project"/>
        </authorList>
    </citation>
    <scope>NUCLEOTIDE SEQUENCE [LARGE SCALE MRNA]</scope>
    <source>
        <tissue>Gill</tissue>
        <tissue>Larva</tissue>
    </source>
</reference>
<name>SMIM8_DANRE</name>
<protein>
    <recommendedName>
        <fullName>Small integral membrane protein 8</fullName>
    </recommendedName>
</protein>
<sequence>MSSGQSSSSSGKAGPQEPPSSAAEPAYRSPGLRGVRTTSLFRAVNPELFIRPNKPVMALGLLALSVCVGYLGYLHAIRDSDQQLYEAVDSDGETYMRRRTSRWD</sequence>